<accession>Q92835</accession>
<accession>O00145</accession>
<accession>Q13544</accession>
<accession>Q13545</accession>
<accession>Q6P5A4</accession>
<accession>Q92656</accession>
<accession>Q9UE80</accession>
<sequence>MVPCWNHGNITRSKAEELLSRTGKDGSFLVRASESISRAYALCVLYRNCVYTYRILPNEDDKFTVQASEGVSMRFFTKLDQLIEFYKKENMGLVTHLQYPVPLEEEDTGDDPEEDTVESVVSPPELPPRNIPLTASSCEAKEVPFSNENPRATETSRPSLSETLFQRLQSMDTSGLPEEHLKAIQDYLSTQLAQDSEFVKTGSSSLPHLKKLTTLLCKELYGEVIRTLPSLESLQRLFDQQLSPGLRPRPQVPGEANPINMVSKLSQLTSLLSSIEDKVKALLHEGPESPHRPSLIPPVTFEVKAESLGIPQKMQLKVDVESGKLIIKKSKDGSEDKFYSHKKILQLIKSQKFLNKLVILVETEKEKILRKEYVFADSKKREGFCQLLQQMKNKHSEQPEPDMITIFIGTWNMGNAPPPKKITSWFLSKGQGKTRDDSADYIPHDIYVIGTQEDPLSEKEWLEILKHSLQEITSVTFKTVAIHTLWNIRIVVLAKPEHENRISHICTDNVKTGIANTLGNKGAVGVSFMFNGTSLGFVNSHLTSGSEKKLRRNQNYMNILRFLALGDKKLSPFNITHRFTHLFWFGDLNYRVDLPTWEAETIIQKIKQQQYADLLSHDQLLTERREQKVFLHFEEEEITFAPTYRFERLTRDKYAYTKQKATGMKYNLPSWCDRVLWKSYPLVHVVCQSYGSTSDIMTSDHSPVFATFEAGVTSQFVSKNGPGTVDSQGQIEFLRCYATLKTKSQTKFYLEFHSSCLESFVKSQEGENEEGSEGELVVKFGETLPKLKPIISDPEYLLDQHILISIKSSDSDESYGEGCIALRLEATETQLPIYTPLTHHGELTGHFQGEIKLQTSQGKTREKLYDFVKTERDESSGPKTLKSLTSHDPMKQWEVTSRAPPCSGSSITEIINPNYMGVGPFGPPMPLHVKQTLSPDQQPTAWSYDQPPKDSPLGPCRGESPPTPPGQPPISPKKFLPSTANRGLPPRTQESRPSDLGKNAGDTLPQEDLPLTKPEMFENPLYGSLSSFPKPAPRKDQESPKMPRKEPPPCPEPGILSPSIVLTKAQEADRGEGPGKQVPAPRLRSFTCSSSAEGRAAGGDKSQGKPKTPVSSQAPVPAKRPIKPSRSEINQQTPPTPTPRPPLPVKSPAVLHLQHSKGRDYRDNTELPHHGKHRPEEGPPGPLGRTAMQ</sequence>
<feature type="chain" id="PRO_0000302866" description="Phosphatidylinositol 3,4,5-trisphosphate 5-phosphatase 1">
    <location>
        <begin position="1"/>
        <end position="1189"/>
    </location>
</feature>
<feature type="domain" description="SH2" evidence="4">
    <location>
        <begin position="5"/>
        <end position="101"/>
    </location>
</feature>
<feature type="region of interest" description="Disordered" evidence="5">
    <location>
        <begin position="103"/>
        <end position="132"/>
    </location>
</feature>
<feature type="region of interest" description="Disordered" evidence="5">
    <location>
        <begin position="870"/>
        <end position="906"/>
    </location>
</feature>
<feature type="region of interest" description="Disordered" evidence="5">
    <location>
        <begin position="922"/>
        <end position="1189"/>
    </location>
</feature>
<feature type="region of interest" description="Interaction with DAB2" evidence="1">
    <location>
        <begin position="1016"/>
        <end position="1030"/>
    </location>
</feature>
<feature type="short sequence motif" description="SH3-binding 1">
    <location>
        <begin position="124"/>
        <end position="129"/>
    </location>
</feature>
<feature type="short sequence motif" description="NPXY motif 1">
    <location>
        <begin position="912"/>
        <end position="915"/>
    </location>
</feature>
<feature type="short sequence motif" description="SH3-binding 2">
    <location>
        <begin position="969"/>
        <end position="974"/>
    </location>
</feature>
<feature type="short sequence motif" description="NPXY motif 2">
    <location>
        <begin position="1019"/>
        <end position="1022"/>
    </location>
</feature>
<feature type="short sequence motif" description="SH3-binding 3">
    <location>
        <begin position="1040"/>
        <end position="1051"/>
    </location>
</feature>
<feature type="compositionally biased region" description="Acidic residues" evidence="5">
    <location>
        <begin position="103"/>
        <end position="117"/>
    </location>
</feature>
<feature type="compositionally biased region" description="Polar residues" evidence="5">
    <location>
        <begin position="931"/>
        <end position="943"/>
    </location>
</feature>
<feature type="compositionally biased region" description="Pro residues" evidence="5">
    <location>
        <begin position="961"/>
        <end position="971"/>
    </location>
</feature>
<feature type="compositionally biased region" description="Basic and acidic residues" evidence="5">
    <location>
        <begin position="1033"/>
        <end position="1047"/>
    </location>
</feature>
<feature type="compositionally biased region" description="Pro residues" evidence="5">
    <location>
        <begin position="1134"/>
        <end position="1145"/>
    </location>
</feature>
<feature type="compositionally biased region" description="Basic and acidic residues" evidence="5">
    <location>
        <begin position="1157"/>
        <end position="1177"/>
    </location>
</feature>
<feature type="modified residue" description="Phosphoserine" evidence="3">
    <location>
        <position position="243"/>
    </location>
</feature>
<feature type="modified residue" description="Phosphotyrosine" evidence="31">
    <location>
        <position position="915"/>
    </location>
</feature>
<feature type="modified residue" description="Phosphoserine" evidence="3">
    <location>
        <position position="934"/>
    </location>
</feature>
<feature type="modified residue" description="Phosphotyrosine" evidence="3">
    <location>
        <position position="944"/>
    </location>
</feature>
<feature type="modified residue" description="Phosphoserine" evidence="32">
    <location>
        <position position="960"/>
    </location>
</feature>
<feature type="modified residue" description="Phosphothreonine" evidence="32">
    <location>
        <position position="963"/>
    </location>
</feature>
<feature type="modified residue" description="Phosphoserine" evidence="32">
    <location>
        <position position="971"/>
    </location>
</feature>
<feature type="modified residue" description="Phosphotyrosine" evidence="3">
    <location>
        <position position="1022"/>
    </location>
</feature>
<feature type="splice variant" id="VSP_027977" description="In isoform 3." evidence="22">
    <location>
        <begin position="1"/>
        <end position="212"/>
    </location>
</feature>
<feature type="splice variant" id="VSP_027978" description="In isoform 2." evidence="21 23 24">
    <location>
        <position position="117"/>
    </location>
</feature>
<feature type="splice variant" id="VSP_027979" description="In isoform 3." evidence="22">
    <original>TTLLCKELYG</original>
    <variation>MFTLSPAPR</variation>
    <location>
        <begin position="213"/>
        <end position="222"/>
    </location>
</feature>
<feature type="sequence variant" id="VAR_034979" description="In one patient with acute myeloid leukemya; somatic mutation." evidence="9">
    <original>V</original>
    <variation>E</variation>
    <location>
        <position position="685"/>
    </location>
</feature>
<feature type="sequence variant" id="VAR_059358" description="In dbSNP:rs9247." evidence="10 16">
    <original>H</original>
    <variation>Y</variation>
    <location>
        <position position="1169"/>
    </location>
</feature>
<feature type="sequence conflict" description="In Ref. 4; AAB49680." evidence="26" ref="4">
    <original>DG</original>
    <variation>GT</variation>
    <location>
        <begin position="25"/>
        <end position="26"/>
    </location>
</feature>
<feature type="sequence conflict" description="In Ref. 4; AAB49680." evidence="26" ref="4">
    <original>P</original>
    <variation>H</variation>
    <location>
        <position position="1029"/>
    </location>
</feature>
<feature type="strand" evidence="33">
    <location>
        <begin position="4"/>
        <end position="9"/>
    </location>
</feature>
<feature type="helix" evidence="33">
    <location>
        <begin position="12"/>
        <end position="22"/>
    </location>
</feature>
<feature type="strand" evidence="33">
    <location>
        <begin position="27"/>
        <end position="32"/>
    </location>
</feature>
<feature type="strand" evidence="33">
    <location>
        <begin position="39"/>
        <end position="45"/>
    </location>
</feature>
<feature type="strand" evidence="33">
    <location>
        <begin position="50"/>
        <end position="57"/>
    </location>
</feature>
<feature type="strand" evidence="33">
    <location>
        <begin position="63"/>
        <end position="65"/>
    </location>
</feature>
<feature type="strand" evidence="33">
    <location>
        <begin position="70"/>
        <end position="72"/>
    </location>
</feature>
<feature type="strand" evidence="33">
    <location>
        <begin position="76"/>
        <end position="78"/>
    </location>
</feature>
<feature type="helix" evidence="33">
    <location>
        <begin position="79"/>
        <end position="85"/>
    </location>
</feature>
<feature type="strand" evidence="33">
    <location>
        <begin position="88"/>
        <end position="95"/>
    </location>
</feature>
<feature type="strand" evidence="36">
    <location>
        <begin position="402"/>
        <end position="412"/>
    </location>
</feature>
<feature type="helix" evidence="36">
    <location>
        <begin position="423"/>
        <end position="426"/>
    </location>
</feature>
<feature type="strand" evidence="36">
    <location>
        <begin position="430"/>
        <end position="433"/>
    </location>
</feature>
<feature type="helix" evidence="36">
    <location>
        <begin position="437"/>
        <end position="439"/>
    </location>
</feature>
<feature type="strand" evidence="36">
    <location>
        <begin position="445"/>
        <end position="453"/>
    </location>
</feature>
<feature type="helix" evidence="36">
    <location>
        <begin position="458"/>
        <end position="473"/>
    </location>
</feature>
<feature type="strand" evidence="36">
    <location>
        <begin position="478"/>
        <end position="485"/>
    </location>
</feature>
<feature type="strand" evidence="36">
    <location>
        <begin position="488"/>
        <end position="494"/>
    </location>
</feature>
<feature type="helix" evidence="36">
    <location>
        <begin position="496"/>
        <end position="498"/>
    </location>
</feature>
<feature type="turn" evidence="36">
    <location>
        <begin position="499"/>
        <end position="501"/>
    </location>
</feature>
<feature type="strand" evidence="36">
    <location>
        <begin position="502"/>
        <end position="511"/>
    </location>
</feature>
<feature type="helix" evidence="36">
    <location>
        <begin position="515"/>
        <end position="517"/>
    </location>
</feature>
<feature type="turn" evidence="35">
    <location>
        <begin position="518"/>
        <end position="520"/>
    </location>
</feature>
<feature type="strand" evidence="36">
    <location>
        <begin position="522"/>
        <end position="530"/>
    </location>
</feature>
<feature type="strand" evidence="36">
    <location>
        <begin position="533"/>
        <end position="541"/>
    </location>
</feature>
<feature type="helix" evidence="34">
    <location>
        <begin position="546"/>
        <end position="548"/>
    </location>
</feature>
<feature type="helix" evidence="36">
    <location>
        <begin position="549"/>
        <end position="562"/>
    </location>
</feature>
<feature type="turn" evidence="36">
    <location>
        <begin position="575"/>
        <end position="577"/>
    </location>
</feature>
<feature type="strand" evidence="36">
    <location>
        <begin position="580"/>
        <end position="587"/>
    </location>
</feature>
<feature type="helix" evidence="36">
    <location>
        <begin position="596"/>
        <end position="598"/>
    </location>
</feature>
<feature type="helix" evidence="36">
    <location>
        <begin position="599"/>
        <end position="607"/>
    </location>
</feature>
<feature type="helix" evidence="36">
    <location>
        <begin position="612"/>
        <end position="615"/>
    </location>
</feature>
<feature type="helix" evidence="36">
    <location>
        <begin position="619"/>
        <end position="625"/>
    </location>
</feature>
<feature type="strand" evidence="36">
    <location>
        <begin position="628"/>
        <end position="630"/>
    </location>
</feature>
<feature type="helix" evidence="36">
    <location>
        <begin position="660"/>
        <end position="662"/>
    </location>
</feature>
<feature type="strand" evidence="36">
    <location>
        <begin position="673"/>
        <end position="679"/>
    </location>
</feature>
<feature type="strand" evidence="36">
    <location>
        <begin position="685"/>
        <end position="692"/>
    </location>
</feature>
<feature type="strand" evidence="36">
    <location>
        <begin position="698"/>
        <end position="701"/>
    </location>
</feature>
<feature type="strand" evidence="36">
    <location>
        <begin position="704"/>
        <end position="711"/>
    </location>
</feature>
<feature type="strand" evidence="36">
    <location>
        <begin position="722"/>
        <end position="724"/>
    </location>
</feature>
<feature type="strand" evidence="36">
    <location>
        <begin position="730"/>
        <end position="740"/>
    </location>
</feature>
<feature type="strand" evidence="36">
    <location>
        <begin position="748"/>
        <end position="753"/>
    </location>
</feature>
<feature type="strand" evidence="36">
    <location>
        <begin position="757"/>
        <end position="759"/>
    </location>
</feature>
<feature type="strand" evidence="36">
    <location>
        <begin position="767"/>
        <end position="770"/>
    </location>
</feature>
<feature type="strand" evidence="36">
    <location>
        <begin position="776"/>
        <end position="781"/>
    </location>
</feature>
<feature type="helix" evidence="36">
    <location>
        <begin position="794"/>
        <end position="797"/>
    </location>
</feature>
<feature type="strand" evidence="36">
    <location>
        <begin position="801"/>
        <end position="808"/>
    </location>
</feature>
<feature type="turn" evidence="36">
    <location>
        <begin position="809"/>
        <end position="811"/>
    </location>
</feature>
<feature type="strand" evidence="36">
    <location>
        <begin position="814"/>
        <end position="821"/>
    </location>
</feature>
<feature type="strand" evidence="36">
    <location>
        <begin position="827"/>
        <end position="829"/>
    </location>
</feature>
<feature type="strand" evidence="36">
    <location>
        <begin position="831"/>
        <end position="839"/>
    </location>
</feature>
<feature type="strand" evidence="36">
    <location>
        <begin position="842"/>
        <end position="854"/>
    </location>
</feature>
<dbReference type="EC" id="3.1.3.86" evidence="6 15 16"/>
<dbReference type="EC" id="3.1.3.56" evidence="16 19"/>
<dbReference type="EC" id="3.1.3.36" evidence="6"/>
<dbReference type="EMBL" id="X98429">
    <property type="protein sequence ID" value="CAA67071.1"/>
    <property type="molecule type" value="mRNA"/>
</dbReference>
<dbReference type="EMBL" id="U57650">
    <property type="protein sequence ID" value="AAB53573.1"/>
    <property type="molecule type" value="mRNA"/>
</dbReference>
<dbReference type="EMBL" id="U50040">
    <property type="protein sequence ID" value="AAC50453.1"/>
    <property type="molecule type" value="mRNA"/>
</dbReference>
<dbReference type="EMBL" id="U50041">
    <property type="protein sequence ID" value="AAC50454.1"/>
    <property type="status" value="ALT_INIT"/>
    <property type="molecule type" value="mRNA"/>
</dbReference>
<dbReference type="EMBL" id="U84400">
    <property type="protein sequence ID" value="AAB49680.1"/>
    <property type="molecule type" value="mRNA"/>
</dbReference>
<dbReference type="EMBL" id="U53470">
    <property type="protein sequence ID" value="AAD00081.1"/>
    <property type="molecule type" value="mRNA"/>
</dbReference>
<dbReference type="EMBL" id="BC062985">
    <property type="protein sequence ID" value="AAH62985.1"/>
    <property type="molecule type" value="mRNA"/>
</dbReference>
<dbReference type="EMBL" id="BC099920">
    <property type="protein sequence ID" value="AAH99920.1"/>
    <property type="molecule type" value="mRNA"/>
</dbReference>
<dbReference type="EMBL" id="BC113580">
    <property type="protein sequence ID" value="AAI13581.1"/>
    <property type="molecule type" value="mRNA"/>
</dbReference>
<dbReference type="EMBL" id="BC113582">
    <property type="protein sequence ID" value="AAI13583.1"/>
    <property type="molecule type" value="mRNA"/>
</dbReference>
<dbReference type="CCDS" id="CCDS74672.1">
    <molecule id="Q92835-1"/>
</dbReference>
<dbReference type="CCDS" id="CCDS77543.1">
    <molecule id="Q92835-2"/>
</dbReference>
<dbReference type="PIR" id="JC4889">
    <property type="entry name" value="JC4889"/>
</dbReference>
<dbReference type="RefSeq" id="NP_001017915.1">
    <molecule id="Q92835-1"/>
    <property type="nucleotide sequence ID" value="NM_001017915.3"/>
</dbReference>
<dbReference type="RefSeq" id="NP_005532.2">
    <molecule id="Q92835-2"/>
    <property type="nucleotide sequence ID" value="NM_005541.4"/>
</dbReference>
<dbReference type="PDB" id="2YSX">
    <property type="method" value="NMR"/>
    <property type="chains" value="A=1-112"/>
</dbReference>
<dbReference type="PDB" id="5RW2">
    <property type="method" value="X-ray"/>
    <property type="resolution" value="1.22 A"/>
    <property type="chains" value="A=397-857"/>
</dbReference>
<dbReference type="PDB" id="5RW3">
    <property type="method" value="X-ray"/>
    <property type="resolution" value="1.37 A"/>
    <property type="chains" value="A=397-857"/>
</dbReference>
<dbReference type="PDB" id="5RW4">
    <property type="method" value="X-ray"/>
    <property type="resolution" value="1.31 A"/>
    <property type="chains" value="A=397-857"/>
</dbReference>
<dbReference type="PDB" id="5RW5">
    <property type="method" value="X-ray"/>
    <property type="resolution" value="1.38 A"/>
    <property type="chains" value="A=397-857"/>
</dbReference>
<dbReference type="PDB" id="5RW6">
    <property type="method" value="X-ray"/>
    <property type="resolution" value="1.32 A"/>
    <property type="chains" value="A=397-857"/>
</dbReference>
<dbReference type="PDB" id="5RW7">
    <property type="method" value="X-ray"/>
    <property type="resolution" value="1.23 A"/>
    <property type="chains" value="A=397-857"/>
</dbReference>
<dbReference type="PDB" id="5RW8">
    <property type="method" value="X-ray"/>
    <property type="resolution" value="1.27 A"/>
    <property type="chains" value="A=397-857"/>
</dbReference>
<dbReference type="PDB" id="5RW9">
    <property type="method" value="X-ray"/>
    <property type="resolution" value="1.45 A"/>
    <property type="chains" value="A=397-857"/>
</dbReference>
<dbReference type="PDB" id="5RWA">
    <property type="method" value="X-ray"/>
    <property type="resolution" value="1.29 A"/>
    <property type="chains" value="A=397-857"/>
</dbReference>
<dbReference type="PDB" id="5RWB">
    <property type="method" value="X-ray"/>
    <property type="resolution" value="1.25 A"/>
    <property type="chains" value="A=397-857"/>
</dbReference>
<dbReference type="PDB" id="5RWC">
    <property type="method" value="X-ray"/>
    <property type="resolution" value="1.40 A"/>
    <property type="chains" value="A=397-857"/>
</dbReference>
<dbReference type="PDB" id="5RWD">
    <property type="method" value="X-ray"/>
    <property type="resolution" value="1.29 A"/>
    <property type="chains" value="A=397-857"/>
</dbReference>
<dbReference type="PDB" id="5RWE">
    <property type="method" value="X-ray"/>
    <property type="resolution" value="1.34 A"/>
    <property type="chains" value="A=397-857"/>
</dbReference>
<dbReference type="PDB" id="5RWF">
    <property type="method" value="X-ray"/>
    <property type="resolution" value="1.35 A"/>
    <property type="chains" value="A=397-857"/>
</dbReference>
<dbReference type="PDB" id="5RWG">
    <property type="method" value="X-ray"/>
    <property type="resolution" value="1.46 A"/>
    <property type="chains" value="A=397-857"/>
</dbReference>
<dbReference type="PDB" id="5RWH">
    <property type="method" value="X-ray"/>
    <property type="resolution" value="1.56 A"/>
    <property type="chains" value="A=397-857"/>
</dbReference>
<dbReference type="PDB" id="5RWI">
    <property type="method" value="X-ray"/>
    <property type="resolution" value="1.29 A"/>
    <property type="chains" value="A=397-857"/>
</dbReference>
<dbReference type="PDB" id="5RWJ">
    <property type="method" value="X-ray"/>
    <property type="resolution" value="1.26 A"/>
    <property type="chains" value="A=397-857"/>
</dbReference>
<dbReference type="PDB" id="5RWK">
    <property type="method" value="X-ray"/>
    <property type="resolution" value="1.32 A"/>
    <property type="chains" value="A=397-857"/>
</dbReference>
<dbReference type="PDB" id="5RWL">
    <property type="method" value="X-ray"/>
    <property type="resolution" value="1.37 A"/>
    <property type="chains" value="A=397-857"/>
</dbReference>
<dbReference type="PDB" id="5RWM">
    <property type="method" value="X-ray"/>
    <property type="resolution" value="1.36 A"/>
    <property type="chains" value="A=397-857"/>
</dbReference>
<dbReference type="PDB" id="5RWN">
    <property type="method" value="X-ray"/>
    <property type="resolution" value="1.38 A"/>
    <property type="chains" value="A=397-857"/>
</dbReference>
<dbReference type="PDB" id="5RWO">
    <property type="method" value="X-ray"/>
    <property type="resolution" value="1.29 A"/>
    <property type="chains" value="A=397-857"/>
</dbReference>
<dbReference type="PDB" id="5RWP">
    <property type="method" value="X-ray"/>
    <property type="resolution" value="1.48 A"/>
    <property type="chains" value="A=397-857"/>
</dbReference>
<dbReference type="PDB" id="5RWQ">
    <property type="method" value="X-ray"/>
    <property type="resolution" value="1.32 A"/>
    <property type="chains" value="A=397-857"/>
</dbReference>
<dbReference type="PDB" id="5RWR">
    <property type="method" value="X-ray"/>
    <property type="resolution" value="1.43 A"/>
    <property type="chains" value="A=397-857"/>
</dbReference>
<dbReference type="PDB" id="5RWS">
    <property type="method" value="X-ray"/>
    <property type="resolution" value="1.28 A"/>
    <property type="chains" value="A=397-857"/>
</dbReference>
<dbReference type="PDB" id="5RWT">
    <property type="method" value="X-ray"/>
    <property type="resolution" value="1.43 A"/>
    <property type="chains" value="A=397-857"/>
</dbReference>
<dbReference type="PDB" id="5RWU">
    <property type="method" value="X-ray"/>
    <property type="resolution" value="1.37 A"/>
    <property type="chains" value="A=397-857"/>
</dbReference>
<dbReference type="PDB" id="5RWV">
    <property type="method" value="X-ray"/>
    <property type="resolution" value="1.25 A"/>
    <property type="chains" value="A=397-857"/>
</dbReference>
<dbReference type="PDB" id="5RWW">
    <property type="method" value="X-ray"/>
    <property type="resolution" value="1.16 A"/>
    <property type="chains" value="A=397-857"/>
</dbReference>
<dbReference type="PDB" id="5RWX">
    <property type="method" value="X-ray"/>
    <property type="resolution" value="1.34 A"/>
    <property type="chains" value="A=397-857"/>
</dbReference>
<dbReference type="PDB" id="5RWY">
    <property type="method" value="X-ray"/>
    <property type="resolution" value="1.35 A"/>
    <property type="chains" value="A=397-857"/>
</dbReference>
<dbReference type="PDB" id="5RWZ">
    <property type="method" value="X-ray"/>
    <property type="resolution" value="1.42 A"/>
    <property type="chains" value="A=397-857"/>
</dbReference>
<dbReference type="PDB" id="5RX0">
    <property type="method" value="X-ray"/>
    <property type="resolution" value="1.43 A"/>
    <property type="chains" value="A=397-857"/>
</dbReference>
<dbReference type="PDB" id="5RX1">
    <property type="method" value="X-ray"/>
    <property type="resolution" value="1.31 A"/>
    <property type="chains" value="A=397-857"/>
</dbReference>
<dbReference type="PDB" id="5RX2">
    <property type="method" value="X-ray"/>
    <property type="resolution" value="1.27 A"/>
    <property type="chains" value="A=397-857"/>
</dbReference>
<dbReference type="PDB" id="5RX3">
    <property type="method" value="X-ray"/>
    <property type="resolution" value="1.45 A"/>
    <property type="chains" value="A=397-857"/>
</dbReference>
<dbReference type="PDB" id="5RX4">
    <property type="method" value="X-ray"/>
    <property type="resolution" value="1.35 A"/>
    <property type="chains" value="A=397-857"/>
</dbReference>
<dbReference type="PDB" id="5RX5">
    <property type="method" value="X-ray"/>
    <property type="resolution" value="1.28 A"/>
    <property type="chains" value="A=397-857"/>
</dbReference>
<dbReference type="PDB" id="5RX6">
    <property type="method" value="X-ray"/>
    <property type="resolution" value="1.45 A"/>
    <property type="chains" value="A=397-857"/>
</dbReference>
<dbReference type="PDB" id="5RX7">
    <property type="method" value="X-ray"/>
    <property type="resolution" value="1.36 A"/>
    <property type="chains" value="A=397-857"/>
</dbReference>
<dbReference type="PDB" id="5RX8">
    <property type="method" value="X-ray"/>
    <property type="resolution" value="1.34 A"/>
    <property type="chains" value="A=397-857"/>
</dbReference>
<dbReference type="PDB" id="5RX9">
    <property type="method" value="X-ray"/>
    <property type="resolution" value="1.29 A"/>
    <property type="chains" value="A=397-857"/>
</dbReference>
<dbReference type="PDB" id="5RXA">
    <property type="method" value="X-ray"/>
    <property type="resolution" value="1.24 A"/>
    <property type="chains" value="A=397-857"/>
</dbReference>
<dbReference type="PDB" id="5RXB">
    <property type="method" value="X-ray"/>
    <property type="resolution" value="1.58 A"/>
    <property type="chains" value="A=397-857"/>
</dbReference>
<dbReference type="PDB" id="5RXC">
    <property type="method" value="X-ray"/>
    <property type="resolution" value="1.59 A"/>
    <property type="chains" value="A=397-857"/>
</dbReference>
<dbReference type="PDB" id="5RXD">
    <property type="method" value="X-ray"/>
    <property type="resolution" value="1.33 A"/>
    <property type="chains" value="A=397-857"/>
</dbReference>
<dbReference type="PDB" id="5RXE">
    <property type="method" value="X-ray"/>
    <property type="resolution" value="1.25 A"/>
    <property type="chains" value="A=397-857"/>
</dbReference>
<dbReference type="PDB" id="5RXF">
    <property type="method" value="X-ray"/>
    <property type="resolution" value="1.26 A"/>
    <property type="chains" value="A=397-857"/>
</dbReference>
<dbReference type="PDB" id="5RXG">
    <property type="method" value="X-ray"/>
    <property type="resolution" value="1.52 A"/>
    <property type="chains" value="A=397-857"/>
</dbReference>
<dbReference type="PDB" id="5RXH">
    <property type="method" value="X-ray"/>
    <property type="resolution" value="1.42 A"/>
    <property type="chains" value="A=397-857"/>
</dbReference>
<dbReference type="PDB" id="5RXI">
    <property type="method" value="X-ray"/>
    <property type="resolution" value="1.74 A"/>
    <property type="chains" value="A=397-857"/>
</dbReference>
<dbReference type="PDB" id="5RXJ">
    <property type="method" value="X-ray"/>
    <property type="resolution" value="1.52 A"/>
    <property type="chains" value="A=397-857"/>
</dbReference>
<dbReference type="PDB" id="5RXK">
    <property type="method" value="X-ray"/>
    <property type="resolution" value="1.46 A"/>
    <property type="chains" value="A=397-857"/>
</dbReference>
<dbReference type="PDB" id="5RXL">
    <property type="method" value="X-ray"/>
    <property type="resolution" value="1.49 A"/>
    <property type="chains" value="A=397-857"/>
</dbReference>
<dbReference type="PDB" id="5RXM">
    <property type="method" value="X-ray"/>
    <property type="resolution" value="1.46 A"/>
    <property type="chains" value="A=397-857"/>
</dbReference>
<dbReference type="PDB" id="5RXO">
    <property type="method" value="X-ray"/>
    <property type="resolution" value="1.71 A"/>
    <property type="chains" value="A=397-857"/>
</dbReference>
<dbReference type="PDB" id="5RXP">
    <property type="method" value="X-ray"/>
    <property type="resolution" value="1.53 A"/>
    <property type="chains" value="A=397-857"/>
</dbReference>
<dbReference type="PDB" id="5RXQ">
    <property type="method" value="X-ray"/>
    <property type="resolution" value="1.65 A"/>
    <property type="chains" value="A=397-857"/>
</dbReference>
<dbReference type="PDB" id="5RXR">
    <property type="method" value="X-ray"/>
    <property type="resolution" value="1.40 A"/>
    <property type="chains" value="A=397-857"/>
</dbReference>
<dbReference type="PDB" id="5RXS">
    <property type="method" value="X-ray"/>
    <property type="resolution" value="1.37 A"/>
    <property type="chains" value="A=397-857"/>
</dbReference>
<dbReference type="PDB" id="5RXT">
    <property type="method" value="X-ray"/>
    <property type="resolution" value="1.63 A"/>
    <property type="chains" value="A=397-857"/>
</dbReference>
<dbReference type="PDB" id="5RXU">
    <property type="method" value="X-ray"/>
    <property type="resolution" value="1.64 A"/>
    <property type="chains" value="A=397-857"/>
</dbReference>
<dbReference type="PDB" id="5RXV">
    <property type="method" value="X-ray"/>
    <property type="resolution" value="1.50 A"/>
    <property type="chains" value="A=397-857"/>
</dbReference>
<dbReference type="PDB" id="5RXW">
    <property type="method" value="X-ray"/>
    <property type="resolution" value="1.34 A"/>
    <property type="chains" value="A=397-857"/>
</dbReference>
<dbReference type="PDB" id="5RXX">
    <property type="method" value="X-ray"/>
    <property type="resolution" value="1.43 A"/>
    <property type="chains" value="A=397-857"/>
</dbReference>
<dbReference type="PDB" id="5RXY">
    <property type="method" value="X-ray"/>
    <property type="resolution" value="1.40 A"/>
    <property type="chains" value="A=397-857"/>
</dbReference>
<dbReference type="PDB" id="5RXZ">
    <property type="method" value="X-ray"/>
    <property type="resolution" value="1.56 A"/>
    <property type="chains" value="A=397-857"/>
</dbReference>
<dbReference type="PDB" id="5RY0">
    <property type="method" value="X-ray"/>
    <property type="resolution" value="1.98 A"/>
    <property type="chains" value="A=397-857"/>
</dbReference>
<dbReference type="PDB" id="5RY1">
    <property type="method" value="X-ray"/>
    <property type="resolution" value="1.52 A"/>
    <property type="chains" value="A=397-857"/>
</dbReference>
<dbReference type="PDB" id="5RY2">
    <property type="method" value="X-ray"/>
    <property type="resolution" value="1.54 A"/>
    <property type="chains" value="A=397-857"/>
</dbReference>
<dbReference type="PDB" id="5RY3">
    <property type="method" value="X-ray"/>
    <property type="resolution" value="1.50 A"/>
    <property type="chains" value="A=397-857"/>
</dbReference>
<dbReference type="PDB" id="5RY4">
    <property type="method" value="X-ray"/>
    <property type="resolution" value="1.47 A"/>
    <property type="chains" value="A=397-857"/>
</dbReference>
<dbReference type="PDB" id="5RY5">
    <property type="method" value="X-ray"/>
    <property type="resolution" value="1.54 A"/>
    <property type="chains" value="A=397-857"/>
</dbReference>
<dbReference type="PDB" id="5RY6">
    <property type="method" value="X-ray"/>
    <property type="resolution" value="1.74 A"/>
    <property type="chains" value="A=397-857"/>
</dbReference>
<dbReference type="PDB" id="5RY7">
    <property type="method" value="X-ray"/>
    <property type="resolution" value="1.60 A"/>
    <property type="chains" value="A=397-857"/>
</dbReference>
<dbReference type="PDB" id="5RY8">
    <property type="method" value="X-ray"/>
    <property type="resolution" value="1.43 A"/>
    <property type="chains" value="A=397-857"/>
</dbReference>
<dbReference type="PDB" id="5RY9">
    <property type="method" value="X-ray"/>
    <property type="resolution" value="1.52 A"/>
    <property type="chains" value="A=397-857"/>
</dbReference>
<dbReference type="PDB" id="5RYA">
    <property type="method" value="X-ray"/>
    <property type="resolution" value="1.32 A"/>
    <property type="chains" value="A=397-857"/>
</dbReference>
<dbReference type="PDB" id="5RYB">
    <property type="method" value="X-ray"/>
    <property type="resolution" value="1.55 A"/>
    <property type="chains" value="A=397-857"/>
</dbReference>
<dbReference type="PDB" id="5RYC">
    <property type="method" value="X-ray"/>
    <property type="resolution" value="1.56 A"/>
    <property type="chains" value="A=397-857"/>
</dbReference>
<dbReference type="PDB" id="5RYD">
    <property type="method" value="X-ray"/>
    <property type="resolution" value="1.60 A"/>
    <property type="chains" value="A=397-857"/>
</dbReference>
<dbReference type="PDB" id="5RYE">
    <property type="method" value="X-ray"/>
    <property type="resolution" value="1.70 A"/>
    <property type="chains" value="A=397-857"/>
</dbReference>
<dbReference type="PDB" id="5RYF">
    <property type="method" value="X-ray"/>
    <property type="resolution" value="1.49 A"/>
    <property type="chains" value="A=397-857"/>
</dbReference>
<dbReference type="PDB" id="5RYG">
    <property type="method" value="X-ray"/>
    <property type="resolution" value="1.47 A"/>
    <property type="chains" value="A=397-857"/>
</dbReference>
<dbReference type="PDB" id="5RYH">
    <property type="method" value="X-ray"/>
    <property type="resolution" value="1.72 A"/>
    <property type="chains" value="A=397-857"/>
</dbReference>
<dbReference type="PDB" id="5RYI">
    <property type="method" value="X-ray"/>
    <property type="resolution" value="1.45 A"/>
    <property type="chains" value="A=397-857"/>
</dbReference>
<dbReference type="PDB" id="5RYJ">
    <property type="method" value="X-ray"/>
    <property type="resolution" value="1.42 A"/>
    <property type="chains" value="A=397-857"/>
</dbReference>
<dbReference type="PDB" id="5RYK">
    <property type="method" value="X-ray"/>
    <property type="resolution" value="1.55 A"/>
    <property type="chains" value="A=397-857"/>
</dbReference>
<dbReference type="PDB" id="5RYL">
    <property type="method" value="X-ray"/>
    <property type="resolution" value="1.55 A"/>
    <property type="chains" value="A=397-857"/>
</dbReference>
<dbReference type="PDB" id="6IBD">
    <property type="method" value="X-ray"/>
    <property type="resolution" value="1.48 A"/>
    <property type="chains" value="A=397-857"/>
</dbReference>
<dbReference type="PDB" id="6XY7">
    <property type="method" value="X-ray"/>
    <property type="resolution" value="1.09 A"/>
    <property type="chains" value="AAA=397-857"/>
</dbReference>
<dbReference type="PDB" id="8PDG">
    <property type="method" value="X-ray"/>
    <property type="resolution" value="1.40 A"/>
    <property type="chains" value="AAA=397-857"/>
</dbReference>
<dbReference type="PDB" id="8PDH">
    <property type="method" value="X-ray"/>
    <property type="resolution" value="1.45 A"/>
    <property type="chains" value="AAA=397-857"/>
</dbReference>
<dbReference type="PDB" id="8PDI">
    <property type="method" value="X-ray"/>
    <property type="resolution" value="1.30 A"/>
    <property type="chains" value="A=397-857"/>
</dbReference>
<dbReference type="PDB" id="8PDJ">
    <property type="method" value="X-ray"/>
    <property type="resolution" value="1.40 A"/>
    <property type="chains" value="AAA=397-857"/>
</dbReference>
<dbReference type="PDB" id="8UM5">
    <property type="method" value="X-ray"/>
    <property type="resolution" value="1.86 A"/>
    <property type="chains" value="A=397-857"/>
</dbReference>
<dbReference type="PDBsum" id="2YSX"/>
<dbReference type="PDBsum" id="5RW2"/>
<dbReference type="PDBsum" id="5RW3"/>
<dbReference type="PDBsum" id="5RW4"/>
<dbReference type="PDBsum" id="5RW5"/>
<dbReference type="PDBsum" id="5RW6"/>
<dbReference type="PDBsum" id="5RW7"/>
<dbReference type="PDBsum" id="5RW8"/>
<dbReference type="PDBsum" id="5RW9"/>
<dbReference type="PDBsum" id="5RWA"/>
<dbReference type="PDBsum" id="5RWB"/>
<dbReference type="PDBsum" id="5RWC"/>
<dbReference type="PDBsum" id="5RWD"/>
<dbReference type="PDBsum" id="5RWE"/>
<dbReference type="PDBsum" id="5RWF"/>
<dbReference type="PDBsum" id="5RWG"/>
<dbReference type="PDBsum" id="5RWH"/>
<dbReference type="PDBsum" id="5RWI"/>
<dbReference type="PDBsum" id="5RWJ"/>
<dbReference type="PDBsum" id="5RWK"/>
<dbReference type="PDBsum" id="5RWL"/>
<dbReference type="PDBsum" id="5RWM"/>
<dbReference type="PDBsum" id="5RWN"/>
<dbReference type="PDBsum" id="5RWO"/>
<dbReference type="PDBsum" id="5RWP"/>
<dbReference type="PDBsum" id="5RWQ"/>
<dbReference type="PDBsum" id="5RWR"/>
<dbReference type="PDBsum" id="5RWS"/>
<dbReference type="PDBsum" id="5RWT"/>
<dbReference type="PDBsum" id="5RWU"/>
<dbReference type="PDBsum" id="5RWV"/>
<dbReference type="PDBsum" id="5RWW"/>
<dbReference type="PDBsum" id="5RWX"/>
<dbReference type="PDBsum" id="5RWY"/>
<dbReference type="PDBsum" id="5RWZ"/>
<dbReference type="PDBsum" id="5RX0"/>
<dbReference type="PDBsum" id="5RX1"/>
<dbReference type="PDBsum" id="5RX2"/>
<dbReference type="PDBsum" id="5RX3"/>
<dbReference type="PDBsum" id="5RX4"/>
<dbReference type="PDBsum" id="5RX5"/>
<dbReference type="PDBsum" id="5RX6"/>
<dbReference type="PDBsum" id="5RX7"/>
<dbReference type="PDBsum" id="5RX8"/>
<dbReference type="PDBsum" id="5RX9"/>
<dbReference type="PDBsum" id="5RXA"/>
<dbReference type="PDBsum" id="5RXB"/>
<dbReference type="PDBsum" id="5RXC"/>
<dbReference type="PDBsum" id="5RXD"/>
<dbReference type="PDBsum" id="5RXE"/>
<dbReference type="PDBsum" id="5RXF"/>
<dbReference type="PDBsum" id="5RXG"/>
<dbReference type="PDBsum" id="5RXH"/>
<dbReference type="PDBsum" id="5RXI"/>
<dbReference type="PDBsum" id="5RXJ"/>
<dbReference type="PDBsum" id="5RXK"/>
<dbReference type="PDBsum" id="5RXL"/>
<dbReference type="PDBsum" id="5RXM"/>
<dbReference type="PDBsum" id="5RXO"/>
<dbReference type="PDBsum" id="5RXP"/>
<dbReference type="PDBsum" id="5RXQ"/>
<dbReference type="PDBsum" id="5RXR"/>
<dbReference type="PDBsum" id="5RXS"/>
<dbReference type="PDBsum" id="5RXT"/>
<dbReference type="PDBsum" id="5RXU"/>
<dbReference type="PDBsum" id="5RXV"/>
<dbReference type="PDBsum" id="5RXW"/>
<dbReference type="PDBsum" id="5RXX"/>
<dbReference type="PDBsum" id="5RXY"/>
<dbReference type="PDBsum" id="5RXZ"/>
<dbReference type="PDBsum" id="5RY0"/>
<dbReference type="PDBsum" id="5RY1"/>
<dbReference type="PDBsum" id="5RY2"/>
<dbReference type="PDBsum" id="5RY3"/>
<dbReference type="PDBsum" id="5RY4"/>
<dbReference type="PDBsum" id="5RY5"/>
<dbReference type="PDBsum" id="5RY6"/>
<dbReference type="PDBsum" id="5RY7"/>
<dbReference type="PDBsum" id="5RY8"/>
<dbReference type="PDBsum" id="5RY9"/>
<dbReference type="PDBsum" id="5RYA"/>
<dbReference type="PDBsum" id="5RYB"/>
<dbReference type="PDBsum" id="5RYC"/>
<dbReference type="PDBsum" id="5RYD"/>
<dbReference type="PDBsum" id="5RYE"/>
<dbReference type="PDBsum" id="5RYF"/>
<dbReference type="PDBsum" id="5RYG"/>
<dbReference type="PDBsum" id="5RYH"/>
<dbReference type="PDBsum" id="5RYI"/>
<dbReference type="PDBsum" id="5RYJ"/>
<dbReference type="PDBsum" id="5RYK"/>
<dbReference type="PDBsum" id="5RYL"/>
<dbReference type="PDBsum" id="6IBD"/>
<dbReference type="PDBsum" id="6XY7"/>
<dbReference type="PDBsum" id="8PDG"/>
<dbReference type="PDBsum" id="8PDH"/>
<dbReference type="PDBsum" id="8PDI"/>
<dbReference type="PDBsum" id="8PDJ"/>
<dbReference type="PDBsum" id="8UM5"/>
<dbReference type="SMR" id="Q92835"/>
<dbReference type="BioGRID" id="109847">
    <property type="interactions" value="58"/>
</dbReference>
<dbReference type="ELM" id="Q92835"/>
<dbReference type="FunCoup" id="Q92835">
    <property type="interactions" value="1011"/>
</dbReference>
<dbReference type="IntAct" id="Q92835">
    <property type="interactions" value="76"/>
</dbReference>
<dbReference type="MINT" id="Q92835"/>
<dbReference type="STRING" id="9606.ENSP00000405338"/>
<dbReference type="BindingDB" id="Q92835"/>
<dbReference type="ChEMBL" id="CHEMBL1781870"/>
<dbReference type="DrugBank" id="DB13012">
    <property type="generic name" value="AQX-1125"/>
</dbReference>
<dbReference type="SwissLipids" id="SLP:000000951"/>
<dbReference type="DEPOD" id="INPP5D"/>
<dbReference type="GlyCosmos" id="Q92835">
    <property type="glycosylation" value="6 sites, 2 glycans"/>
</dbReference>
<dbReference type="GlyGen" id="Q92835">
    <property type="glycosylation" value="9 sites, 2 O-linked glycans (6 sites)"/>
</dbReference>
<dbReference type="iPTMnet" id="Q92835"/>
<dbReference type="PhosphoSitePlus" id="Q92835"/>
<dbReference type="BioMuta" id="INPP5D"/>
<dbReference type="DMDM" id="158564077"/>
<dbReference type="jPOST" id="Q92835"/>
<dbReference type="MassIVE" id="Q92835"/>
<dbReference type="PaxDb" id="9606-ENSP00000405338"/>
<dbReference type="PeptideAtlas" id="Q92835"/>
<dbReference type="ProteomicsDB" id="75518">
    <molecule id="Q92835-1"/>
</dbReference>
<dbReference type="ProteomicsDB" id="75519">
    <molecule id="Q92835-2"/>
</dbReference>
<dbReference type="ProteomicsDB" id="75520">
    <molecule id="Q92835-3"/>
</dbReference>
<dbReference type="Antibodypedia" id="4272">
    <property type="antibodies" value="573 antibodies from 43 providers"/>
</dbReference>
<dbReference type="DNASU" id="3635"/>
<dbReference type="Ensembl" id="ENST00000359570.9">
    <molecule id="Q92835-2"/>
    <property type="protein sequence ID" value="ENSP00000352575.7"/>
    <property type="gene ID" value="ENSG00000168918.14"/>
</dbReference>
<dbReference type="Ensembl" id="ENST00000445964.6">
    <molecule id="Q92835-1"/>
    <property type="protein sequence ID" value="ENSP00000405338.2"/>
    <property type="gene ID" value="ENSG00000168918.14"/>
</dbReference>
<dbReference type="Ensembl" id="ENST00000629761.2">
    <molecule id="Q92835-2"/>
    <property type="protein sequence ID" value="ENSP00000486669.1"/>
    <property type="gene ID" value="ENSG00000281614.3"/>
</dbReference>
<dbReference type="Ensembl" id="ENST00000630854.3">
    <molecule id="Q92835-1"/>
    <property type="protein sequence ID" value="ENSP00000487191.1"/>
    <property type="gene ID" value="ENSG00000281614.3"/>
</dbReference>
<dbReference type="GeneID" id="3635"/>
<dbReference type="KEGG" id="hsa:3635"/>
<dbReference type="MANE-Select" id="ENST00000445964.6">
    <property type="protein sequence ID" value="ENSP00000405338.2"/>
    <property type="RefSeq nucleotide sequence ID" value="NM_001017915.3"/>
    <property type="RefSeq protein sequence ID" value="NP_001017915.1"/>
</dbReference>
<dbReference type="UCSC" id="uc032ovq.2">
    <molecule id="Q92835-1"/>
    <property type="organism name" value="human"/>
</dbReference>
<dbReference type="AGR" id="HGNC:6079"/>
<dbReference type="CTD" id="3635"/>
<dbReference type="DisGeNET" id="3635"/>
<dbReference type="GeneCards" id="INPP5D"/>
<dbReference type="HGNC" id="HGNC:6079">
    <property type="gene designation" value="INPP5D"/>
</dbReference>
<dbReference type="HPA" id="ENSG00000168918">
    <property type="expression patterns" value="Tissue enhanced (intestine, lymphoid tissue)"/>
</dbReference>
<dbReference type="MalaCards" id="INPP5D"/>
<dbReference type="MIM" id="601582">
    <property type="type" value="gene"/>
</dbReference>
<dbReference type="neXtProt" id="NX_Q92835"/>
<dbReference type="NIAGADS" id="ENSG00000168918"/>
<dbReference type="OpenTargets" id="ENSG00000168918"/>
<dbReference type="PharmGKB" id="PA29887"/>
<dbReference type="VEuPathDB" id="HostDB:ENSG00000168918"/>
<dbReference type="eggNOG" id="KOG0565">
    <property type="taxonomic scope" value="Eukaryota"/>
</dbReference>
<dbReference type="GeneTree" id="ENSGT00940000156202"/>
<dbReference type="InParanoid" id="Q92835"/>
<dbReference type="OMA" id="DSWFQCK"/>
<dbReference type="OrthoDB" id="7862313at2759"/>
<dbReference type="PAN-GO" id="Q92835">
    <property type="GO annotations" value="7 GO annotations based on evolutionary models"/>
</dbReference>
<dbReference type="PhylomeDB" id="Q92835"/>
<dbReference type="TreeFam" id="TF323475"/>
<dbReference type="BioCyc" id="MetaCyc:HS09849-MONOMER"/>
<dbReference type="BRENDA" id="3.1.3.86">
    <property type="organism ID" value="2681"/>
</dbReference>
<dbReference type="PathwayCommons" id="Q92835"/>
<dbReference type="Reactome" id="R-HSA-1660499">
    <property type="pathway name" value="Synthesis of PIPs at the plasma membrane"/>
</dbReference>
<dbReference type="Reactome" id="R-HSA-1855204">
    <property type="pathway name" value="Synthesis of IP3 and IP4 in the cytosol"/>
</dbReference>
<dbReference type="Reactome" id="R-HSA-202424">
    <property type="pathway name" value="Downstream TCR signaling"/>
</dbReference>
<dbReference type="Reactome" id="R-HSA-210990">
    <property type="pathway name" value="PECAM1 interactions"/>
</dbReference>
<dbReference type="Reactome" id="R-HSA-912526">
    <property type="pathway name" value="Interleukin receptor SHC signaling"/>
</dbReference>
<dbReference type="Reactome" id="R-HSA-9680350">
    <property type="pathway name" value="Signaling by CSF1 (M-CSF) in myeloid cells"/>
</dbReference>
<dbReference type="SignaLink" id="Q92835"/>
<dbReference type="SIGNOR" id="Q92835"/>
<dbReference type="BioGRID-ORCS" id="3635">
    <property type="hits" value="16 hits in 336 CRISPR screens"/>
</dbReference>
<dbReference type="ChiTaRS" id="INPP5D">
    <property type="organism name" value="human"/>
</dbReference>
<dbReference type="EvolutionaryTrace" id="Q92835"/>
<dbReference type="GeneWiki" id="INPP5D"/>
<dbReference type="GenomeRNAi" id="3635"/>
<dbReference type="Pharos" id="Q92835">
    <property type="development level" value="Tbio"/>
</dbReference>
<dbReference type="PRO" id="PR:Q92835"/>
<dbReference type="Proteomes" id="UP000005640">
    <property type="component" value="Chromosome 2"/>
</dbReference>
<dbReference type="RNAct" id="Q92835">
    <property type="molecule type" value="protein"/>
</dbReference>
<dbReference type="Bgee" id="ENSG00000168918">
    <property type="expression patterns" value="Expressed in granulocyte and 99 other cell types or tissues"/>
</dbReference>
<dbReference type="ExpressionAtlas" id="Q92835">
    <property type="expression patterns" value="baseline and differential"/>
</dbReference>
<dbReference type="GO" id="GO:0005737">
    <property type="term" value="C:cytoplasm"/>
    <property type="evidence" value="ECO:0000314"/>
    <property type="project" value="UniProt"/>
</dbReference>
<dbReference type="GO" id="GO:0005856">
    <property type="term" value="C:cytoskeleton"/>
    <property type="evidence" value="ECO:0007669"/>
    <property type="project" value="UniProtKB-SubCell"/>
</dbReference>
<dbReference type="GO" id="GO:0005829">
    <property type="term" value="C:cytosol"/>
    <property type="evidence" value="ECO:0000314"/>
    <property type="project" value="HPA"/>
</dbReference>
<dbReference type="GO" id="GO:0045121">
    <property type="term" value="C:membrane raft"/>
    <property type="evidence" value="ECO:0007669"/>
    <property type="project" value="UniProtKB-SubCell"/>
</dbReference>
<dbReference type="GO" id="GO:0005886">
    <property type="term" value="C:plasma membrane"/>
    <property type="evidence" value="ECO:0007669"/>
    <property type="project" value="UniProtKB-SubCell"/>
</dbReference>
<dbReference type="GO" id="GO:0052659">
    <property type="term" value="F:inositol-1,3,4,5-tetrakisphosphate 5-phosphatase activity"/>
    <property type="evidence" value="ECO:0007669"/>
    <property type="project" value="RHEA"/>
</dbReference>
<dbReference type="GO" id="GO:0004445">
    <property type="term" value="F:inositol-polyphosphate 5-phosphatase activity"/>
    <property type="evidence" value="ECO:0000314"/>
    <property type="project" value="UniProt"/>
</dbReference>
<dbReference type="GO" id="GO:0016314">
    <property type="term" value="F:phosphatidylinositol-3,4,5-trisphosphate 3-phosphatase activity"/>
    <property type="evidence" value="ECO:0000304"/>
    <property type="project" value="Reactome"/>
</dbReference>
<dbReference type="GO" id="GO:0034485">
    <property type="term" value="F:phosphatidylinositol-3,4,5-trisphosphate 5-phosphatase activity"/>
    <property type="evidence" value="ECO:0000304"/>
    <property type="project" value="Reactome"/>
</dbReference>
<dbReference type="GO" id="GO:0004439">
    <property type="term" value="F:phosphatidylinositol-4,5-bisphosphate 5-phosphatase activity"/>
    <property type="evidence" value="ECO:0007669"/>
    <property type="project" value="UniProtKB-EC"/>
</dbReference>
<dbReference type="GO" id="GO:0017124">
    <property type="term" value="F:SH3 domain binding"/>
    <property type="evidence" value="ECO:0007669"/>
    <property type="project" value="UniProtKB-KW"/>
</dbReference>
<dbReference type="GO" id="GO:0006915">
    <property type="term" value="P:apoptotic process"/>
    <property type="evidence" value="ECO:0007669"/>
    <property type="project" value="UniProtKB-KW"/>
</dbReference>
<dbReference type="GO" id="GO:0008340">
    <property type="term" value="P:determination of adult lifespan"/>
    <property type="evidence" value="ECO:0007669"/>
    <property type="project" value="Ensembl"/>
</dbReference>
<dbReference type="GO" id="GO:0016064">
    <property type="term" value="P:immunoglobulin mediated immune response"/>
    <property type="evidence" value="ECO:0007669"/>
    <property type="project" value="Ensembl"/>
</dbReference>
<dbReference type="GO" id="GO:0035556">
    <property type="term" value="P:intracellular signal transduction"/>
    <property type="evidence" value="ECO:0007669"/>
    <property type="project" value="Ensembl"/>
</dbReference>
<dbReference type="GO" id="GO:0030889">
    <property type="term" value="P:negative regulation of B cell proliferation"/>
    <property type="evidence" value="ECO:0007669"/>
    <property type="project" value="Ensembl"/>
</dbReference>
<dbReference type="GO" id="GO:0045779">
    <property type="term" value="P:negative regulation of bone resorption"/>
    <property type="evidence" value="ECO:0000318"/>
    <property type="project" value="GO_Central"/>
</dbReference>
<dbReference type="GO" id="GO:0032715">
    <property type="term" value="P:negative regulation of interleukin-6 production"/>
    <property type="evidence" value="ECO:0007669"/>
    <property type="project" value="Ensembl"/>
</dbReference>
<dbReference type="GO" id="GO:0045656">
    <property type="term" value="P:negative regulation of monocyte differentiation"/>
    <property type="evidence" value="ECO:0007669"/>
    <property type="project" value="Ensembl"/>
</dbReference>
<dbReference type="GO" id="GO:0045953">
    <property type="term" value="P:negative regulation of natural killer cell mediated cytotoxicity"/>
    <property type="evidence" value="ECO:0000314"/>
    <property type="project" value="UniProt"/>
</dbReference>
<dbReference type="GO" id="GO:0045659">
    <property type="term" value="P:negative regulation of neutrophil differentiation"/>
    <property type="evidence" value="ECO:0000318"/>
    <property type="project" value="GO_Central"/>
</dbReference>
<dbReference type="GO" id="GO:0045671">
    <property type="term" value="P:negative regulation of osteoclast differentiation"/>
    <property type="evidence" value="ECO:0007669"/>
    <property type="project" value="Ensembl"/>
</dbReference>
<dbReference type="GO" id="GO:0009968">
    <property type="term" value="P:negative regulation of signal transduction"/>
    <property type="evidence" value="ECO:0000318"/>
    <property type="project" value="GO_Central"/>
</dbReference>
<dbReference type="GO" id="GO:0006796">
    <property type="term" value="P:phosphate-containing compound metabolic process"/>
    <property type="evidence" value="ECO:0000304"/>
    <property type="project" value="ProtInc"/>
</dbReference>
<dbReference type="GO" id="GO:0006661">
    <property type="term" value="P:phosphatidylinositol biosynthetic process"/>
    <property type="evidence" value="ECO:0000304"/>
    <property type="project" value="Reactome"/>
</dbReference>
<dbReference type="GO" id="GO:0046856">
    <property type="term" value="P:phosphatidylinositol dephosphorylation"/>
    <property type="evidence" value="ECO:0007669"/>
    <property type="project" value="InterPro"/>
</dbReference>
<dbReference type="GO" id="GO:0043065">
    <property type="term" value="P:positive regulation of apoptotic process"/>
    <property type="evidence" value="ECO:0007669"/>
    <property type="project" value="Ensembl"/>
</dbReference>
<dbReference type="GO" id="GO:0045579">
    <property type="term" value="P:positive regulation of B cell differentiation"/>
    <property type="evidence" value="ECO:0000318"/>
    <property type="project" value="GO_Central"/>
</dbReference>
<dbReference type="GO" id="GO:0045648">
    <property type="term" value="P:positive regulation of erythrocyte differentiation"/>
    <property type="evidence" value="ECO:0007669"/>
    <property type="project" value="Ensembl"/>
</dbReference>
<dbReference type="GO" id="GO:0050776">
    <property type="term" value="P:regulation of immune response"/>
    <property type="evidence" value="ECO:0000318"/>
    <property type="project" value="GO_Central"/>
</dbReference>
<dbReference type="GO" id="GO:0007165">
    <property type="term" value="P:signal transduction"/>
    <property type="evidence" value="ECO:0000304"/>
    <property type="project" value="ProtInc"/>
</dbReference>
<dbReference type="GO" id="GO:0050852">
    <property type="term" value="P:T cell receptor signaling pathway"/>
    <property type="evidence" value="ECO:0000304"/>
    <property type="project" value="Reactome"/>
</dbReference>
<dbReference type="CDD" id="cd09100">
    <property type="entry name" value="INPP5c_SHIP1-INPP5D"/>
    <property type="match status" value="1"/>
</dbReference>
<dbReference type="CDD" id="cd10343">
    <property type="entry name" value="SH2_SHIP"/>
    <property type="match status" value="1"/>
</dbReference>
<dbReference type="FunFam" id="3.30.505.10:FF:000035">
    <property type="entry name" value="phosphatidylinositol 3,4,5-trisphosphate 5-phosphatase 1"/>
    <property type="match status" value="1"/>
</dbReference>
<dbReference type="FunFam" id="3.60.10.10:FF:000005">
    <property type="entry name" value="phosphatidylinositol 3,4,5-trisphosphate 5-phosphatase 1"/>
    <property type="match status" value="1"/>
</dbReference>
<dbReference type="Gene3D" id="3.60.10.10">
    <property type="entry name" value="Endonuclease/exonuclease/phosphatase"/>
    <property type="match status" value="1"/>
</dbReference>
<dbReference type="Gene3D" id="3.30.505.10">
    <property type="entry name" value="SH2 domain"/>
    <property type="match status" value="1"/>
</dbReference>
<dbReference type="InterPro" id="IPR036691">
    <property type="entry name" value="Endo/exonu/phosph_ase_sf"/>
</dbReference>
<dbReference type="InterPro" id="IPR000300">
    <property type="entry name" value="IPPc"/>
</dbReference>
<dbReference type="InterPro" id="IPR000980">
    <property type="entry name" value="SH2"/>
</dbReference>
<dbReference type="InterPro" id="IPR036860">
    <property type="entry name" value="SH2_dom_sf"/>
</dbReference>
<dbReference type="PANTHER" id="PTHR46051:SF3">
    <property type="entry name" value="PHOSPHATIDYLINOSITOL 3,4,5-TRISPHOSPHATE 5-PHOSPHATASE 1"/>
    <property type="match status" value="1"/>
</dbReference>
<dbReference type="PANTHER" id="PTHR46051">
    <property type="entry name" value="SH2 DOMAIN-CONTAINING PROTEIN"/>
    <property type="match status" value="1"/>
</dbReference>
<dbReference type="Pfam" id="PF24147">
    <property type="entry name" value="C2_SHIP1-2_2nd"/>
    <property type="match status" value="1"/>
</dbReference>
<dbReference type="Pfam" id="PF24150">
    <property type="entry name" value="C2_SHIP1-2_first"/>
    <property type="match status" value="1"/>
</dbReference>
<dbReference type="Pfam" id="PF22669">
    <property type="entry name" value="Exo_endo_phos2"/>
    <property type="match status" value="1"/>
</dbReference>
<dbReference type="Pfam" id="PF00017">
    <property type="entry name" value="SH2"/>
    <property type="match status" value="1"/>
</dbReference>
<dbReference type="PRINTS" id="PR00401">
    <property type="entry name" value="SH2DOMAIN"/>
</dbReference>
<dbReference type="SMART" id="SM00128">
    <property type="entry name" value="IPPc"/>
    <property type="match status" value="1"/>
</dbReference>
<dbReference type="SMART" id="SM00252">
    <property type="entry name" value="SH2"/>
    <property type="match status" value="1"/>
</dbReference>
<dbReference type="SUPFAM" id="SSF56219">
    <property type="entry name" value="DNase I-like"/>
    <property type="match status" value="1"/>
</dbReference>
<dbReference type="SUPFAM" id="SSF55550">
    <property type="entry name" value="SH2 domain"/>
    <property type="match status" value="1"/>
</dbReference>
<dbReference type="PROSITE" id="PS50001">
    <property type="entry name" value="SH2"/>
    <property type="match status" value="1"/>
</dbReference>
<organism>
    <name type="scientific">Homo sapiens</name>
    <name type="common">Human</name>
    <dbReference type="NCBI Taxonomy" id="9606"/>
    <lineage>
        <taxon>Eukaryota</taxon>
        <taxon>Metazoa</taxon>
        <taxon>Chordata</taxon>
        <taxon>Craniata</taxon>
        <taxon>Vertebrata</taxon>
        <taxon>Euteleostomi</taxon>
        <taxon>Mammalia</taxon>
        <taxon>Eutheria</taxon>
        <taxon>Euarchontoglires</taxon>
        <taxon>Primates</taxon>
        <taxon>Haplorrhini</taxon>
        <taxon>Catarrhini</taxon>
        <taxon>Hominidae</taxon>
        <taxon>Homo</taxon>
    </lineage>
</organism>
<name>SHIP1_HUMAN</name>
<reference key="1">
    <citation type="journal article" date="1996" name="Biochem. Biophys. Res. Commun.">
        <title>Cloning and expression of a human placenta inositol 1,3,4,5-tetrakisphosphate and phosphatidylinositol 3,4,5-trisphosphate 5-phosphatase.</title>
        <authorList>
            <person name="Drayer A.L."/>
            <person name="Pesesse X."/>
            <person name="De Smedt F."/>
            <person name="Woscholski R."/>
            <person name="Parker P."/>
            <person name="Erneux C."/>
        </authorList>
    </citation>
    <scope>NUCLEOTIDE SEQUENCE [MRNA] (ISOFORM 2)</scope>
    <scope>CATALYTIC ACTIVITY</scope>
    <scope>TISSUE SPECIFICITY</scope>
    <scope>VARIANT TYR-1169</scope>
</reference>
<reference key="2">
    <citation type="journal article" date="1996" name="Blood">
        <title>Cloning and characterization of human SHIP, the 145-kD inositol 5-phosphatase that associates with SHC after cytokine stimulation.</title>
        <authorList>
            <person name="Ware M.D."/>
            <person name="Rosten P."/>
            <person name="Damen J.E."/>
            <person name="Liu L."/>
            <person name="Humphries R.K."/>
            <person name="Krystal G."/>
        </authorList>
    </citation>
    <scope>NUCLEOTIDE SEQUENCE [MRNA] (ISOFORM 2)</scope>
    <scope>TISSUE SPECIFICITY</scope>
    <scope>INTERACTION WITH SHC1</scope>
</reference>
<reference key="3">
    <citation type="journal article" date="1996" name="Curr. Biol.">
        <title>Multiple forms of an inositol polyphosphate 5-phosphatase form signaling complexes with Shc and Grb2.</title>
        <authorList>
            <person name="Kavanaugh W.M."/>
            <person name="Pot D.A."/>
            <person name="Chin S.M."/>
            <person name="Deuter-Reinhard M."/>
            <person name="Jefferson A.B."/>
            <person name="Norris F.A."/>
            <person name="Masiarz F.R."/>
            <person name="Cousens L.S."/>
            <person name="Majerus P.W."/>
            <person name="Williams L.T."/>
        </authorList>
    </citation>
    <scope>NUCLEOTIDE SEQUENCE [MRNA] (ISOFORM 3)</scope>
    <scope>NUCLEOTIDE SEQUENCE [MRNA] OF 1-1139 (ISOFORM 1)</scope>
    <scope>CATALYTIC ACTIVITY</scope>
    <scope>INTERACTION WITH GRB2</scope>
    <source>
        <tissue>Lung</tissue>
    </source>
</reference>
<reference key="4">
    <citation type="journal article" date="1997" name="Blood">
        <title>The human SHIP gene is differentially expressed in cell lineages of the bone marrow and blood.</title>
        <authorList>
            <person name="Geier S.J."/>
            <person name="Algate P.A."/>
            <person name="Carlberg K."/>
            <person name="Flowers D."/>
            <person name="Friedman C."/>
            <person name="Trask B."/>
            <person name="Rohrschneider L.R."/>
        </authorList>
    </citation>
    <scope>NUCLEOTIDE SEQUENCE [MRNA] (ISOFORM 1)</scope>
    <scope>TISSUE SPECIFICITY</scope>
</reference>
<reference key="5">
    <citation type="journal article" date="1997" name="Blood">
        <title>Purification and molecular cloning of SH2- and SH3-containing inositol polyphosphate-5-phosphatase, which is involved in the signaling pathway of granulocyte-macrophage colony-stimulating factor, erythropoietin, and Bcr-Abl.</title>
        <authorList>
            <person name="Odai H."/>
            <person name="Sasaki K."/>
            <person name="Iwamatsu A."/>
            <person name="Nakamoto T."/>
            <person name="Ueno H."/>
            <person name="Yamagata T."/>
            <person name="Mitani K."/>
            <person name="Yazaki Y."/>
            <person name="Hirai H."/>
        </authorList>
    </citation>
    <scope>NUCLEOTIDE SEQUENCE [MRNA] (ISOFORM 1)</scope>
    <scope>TISSUE SPECIFICITY</scope>
    <scope>PHOSPHORYLATION</scope>
    <scope>INTERACTION WITH GRB2</scope>
    <scope>CATALYTIC ACTIVITY</scope>
    <scope>FUNCTION</scope>
</reference>
<reference key="6">
    <citation type="journal article" date="2004" name="Genome Res.">
        <title>The status, quality, and expansion of the NIH full-length cDNA project: the Mammalian Gene Collection (MGC).</title>
        <authorList>
            <consortium name="The MGC Project Team"/>
        </authorList>
    </citation>
    <scope>NUCLEOTIDE SEQUENCE [LARGE SCALE MRNA] (ISOFORM 2)</scope>
    <scope>VARIANT TYR-1169</scope>
    <source>
        <tissue>B-cell</tissue>
        <tissue>Lymph</tissue>
    </source>
</reference>
<reference key="7">
    <citation type="journal article" date="1999" name="J. Immunol.">
        <title>CDw150 associates with src-homology 2-containing inositol phosphatase and modulates CD95-mediated apoptosis.</title>
        <authorList>
            <person name="Mikhalap S.V."/>
            <person name="Shlapatska L.M."/>
            <person name="Berdova A.G."/>
            <person name="Law C.L."/>
            <person name="Clark E.A."/>
            <person name="Sidorenko S.P."/>
        </authorList>
    </citation>
    <scope>INTERACTION WITH SLAMF1</scope>
</reference>
<reference key="8">
    <citation type="journal article" date="2000" name="Cell. Signal.">
        <title>The phosphatidylinositol polyphosphate 5-phosphatase SHIP1 associates with the dok1 phosphoprotein in bcr-Abl transformed cells.</title>
        <authorList>
            <person name="Dunant N.M."/>
            <person name="Wisniewski D."/>
            <person name="Strife A."/>
            <person name="Clarkson B."/>
            <person name="Resh M.D."/>
        </authorList>
    </citation>
    <scope>SUBCELLULAR LOCATION</scope>
    <scope>PHOSPHORYLATION</scope>
    <scope>INTERACTION WITH DOK1</scope>
</reference>
<reference key="9">
    <citation type="journal article" date="2000" name="J. Biol. Chem.">
        <title>The isolation and characterization of a cDNA encoding phospholipid-specific inositol polyphosphate 5-phosphatase.</title>
        <authorList>
            <person name="Kisseleva M.V."/>
            <person name="Wilson M.P."/>
            <person name="Majerus P.W."/>
        </authorList>
    </citation>
    <scope>CATALYTIC ACTIVITY</scope>
    <scope>BIOPHYSICOCHEMICAL PROPERTIES</scope>
    <scope>FUNCTION</scope>
</reference>
<reference key="10">
    <citation type="journal article" date="2002" name="J. Immunol.">
        <title>Evidence that SHIP-1 contributes to phosphatidylinositol 3,4,5-trisphosphate metabolism in T lymphocytes and can regulate novel phosphoinositide 3-kinase effectors.</title>
        <authorList>
            <person name="Freeburn R.W."/>
            <person name="Wright K.L."/>
            <person name="Burgess S.J."/>
            <person name="Astoul E."/>
            <person name="Cantrell D.A."/>
            <person name="Ward S.G."/>
        </authorList>
    </citation>
    <scope>FUNCTION</scope>
</reference>
<reference key="11">
    <citation type="journal article" date="2005" name="Nat. Biotechnol.">
        <title>Immunoaffinity profiling of tyrosine phosphorylation in cancer cells.</title>
        <authorList>
            <person name="Rush J."/>
            <person name="Moritz A."/>
            <person name="Lee K.A."/>
            <person name="Guo A."/>
            <person name="Goss V.L."/>
            <person name="Spek E.J."/>
            <person name="Zhang H."/>
            <person name="Zha X.-M."/>
            <person name="Polakiewicz R.D."/>
            <person name="Comb M.J."/>
        </authorList>
    </citation>
    <scope>PHOSPHORYLATION [LARGE SCALE ANALYSIS] AT TYR-915</scope>
    <scope>IDENTIFICATION BY MASS SPECTROMETRY [LARGE SCALE ANALYSIS]</scope>
</reference>
<reference key="12">
    <citation type="journal article" date="2006" name="Cell. Signal.">
        <title>The Src homology 2-containing inositol 5-phosphatase 1 (SHIP1) is involved in CD32a signaling in human neutrophils.</title>
        <authorList>
            <person name="Vaillancourt M."/>
            <person name="Levasseur S."/>
            <person name="Tremblay M.-L."/>
            <person name="Marois L."/>
            <person name="Rollet-Labelle E."/>
            <person name="Naccache P.H."/>
        </authorList>
    </citation>
    <scope>FUNCTION</scope>
</reference>
<reference key="13">
    <citation type="journal article" date="2009" name="J. Immunol.">
        <title>FCRL3, an autoimmune susceptibility gene, has inhibitory potential on B-cell receptor-mediated signaling.</title>
        <authorList>
            <person name="Kochi Y."/>
            <person name="Myouzen K."/>
            <person name="Yamada R."/>
            <person name="Suzuki A."/>
            <person name="Kurosaki T."/>
            <person name="Nakamura Y."/>
            <person name="Yamamoto K."/>
        </authorList>
    </citation>
    <scope>INTERACTION WITH FCRL3</scope>
</reference>
<reference key="14">
    <citation type="journal article" date="2011" name="BMC Syst. Biol.">
        <title>Initial characterization of the human central proteome.</title>
        <authorList>
            <person name="Burkard T.R."/>
            <person name="Planyavsky M."/>
            <person name="Kaupe I."/>
            <person name="Breitwieser F.P."/>
            <person name="Buerckstuemmer T."/>
            <person name="Bennett K.L."/>
            <person name="Superti-Furga G."/>
            <person name="Colinge J."/>
        </authorList>
    </citation>
    <scope>IDENTIFICATION BY MASS SPECTROMETRY [LARGE SCALE ANALYSIS]</scope>
</reference>
<reference key="15">
    <citation type="journal article" date="2011" name="Immunol. Lett.">
        <title>FCRL6 receptor: expression and associated proteins.</title>
        <authorList>
            <person name="Kulemzin S.V."/>
            <person name="Zamoshnikova A.Y."/>
            <person name="Yurchenko M.Y."/>
            <person name="Vitak N.Y."/>
            <person name="Najakshin A.M."/>
            <person name="Fayngerts S.A."/>
            <person name="Chikaev N.A."/>
            <person name="Reshetnikova E.S."/>
            <person name="Kashirina N.M."/>
            <person name="Peclo M.M."/>
            <person name="Rutkevich P.N."/>
            <person name="Shevelev A.Y."/>
            <person name="Yanushevskaya E.V."/>
            <person name="Baranov K.O."/>
            <person name="Mamonkin M."/>
            <person name="Vlasik T.N."/>
            <person name="Sidorenko S.P."/>
            <person name="Taranin A.V."/>
            <person name="Mechetina L.V."/>
        </authorList>
    </citation>
    <scope>INTERACTION WITH FCRL6</scope>
</reference>
<reference key="16">
    <citation type="journal article" date="2014" name="J. Proteomics">
        <title>An enzyme assisted RP-RPLC approach for in-depth analysis of human liver phosphoproteome.</title>
        <authorList>
            <person name="Bian Y."/>
            <person name="Song C."/>
            <person name="Cheng K."/>
            <person name="Dong M."/>
            <person name="Wang F."/>
            <person name="Huang J."/>
            <person name="Sun D."/>
            <person name="Wang L."/>
            <person name="Ye M."/>
            <person name="Zou H."/>
        </authorList>
    </citation>
    <scope>PHOSPHORYLATION [LARGE SCALE ANALYSIS] AT SER-960; THR-963 AND SER-971</scope>
    <scope>IDENTIFICATION BY MASS SPECTROMETRY [LARGE SCALE ANALYSIS]</scope>
    <source>
        <tissue>Liver</tissue>
    </source>
</reference>
<reference key="17">
    <citation type="journal article" date="2014" name="Exp. Hematol.">
        <title>Phosphorylated c-Mpl tyrosine 591 regulates thrombopoietin-induced signaling.</title>
        <authorList>
            <person name="Sangkhae V."/>
            <person name="Saur S.J."/>
            <person name="Kaushansky A."/>
            <person name="Kaushansky K."/>
            <person name="Hitchcock I.S."/>
        </authorList>
    </citation>
    <scope>INTERACTION WITH MPL/TPOR</scope>
</reference>
<reference key="18">
    <citation type="submission" date="2008-04" db="PDB data bank">
        <title>Solution structure of the human SHIP SH2 domain.</title>
        <authorList>
            <consortium name="RIKEN structural genomics initiative (RSGI)"/>
        </authorList>
    </citation>
    <scope>STRUCTURE BY NMR OF 1-112</scope>
</reference>
<reference key="19">
    <citation type="journal article" date="2003" name="Leukemia">
        <title>Possible dominant-negative mutation of the SHIP gene in acute myeloid leukemia.</title>
        <authorList>
            <person name="Luo J.-M."/>
            <person name="Yoshida H."/>
            <person name="Komura S."/>
            <person name="Ohishi N."/>
            <person name="Pan L."/>
            <person name="Shigeno K."/>
            <person name="Hanamura I."/>
            <person name="Miura K."/>
            <person name="Iida S."/>
            <person name="Ueda R."/>
            <person name="Naoe T."/>
            <person name="Akao Y."/>
            <person name="Ohno R."/>
            <person name="Ohnishi K."/>
        </authorList>
    </citation>
    <scope>VARIANT GLU-685</scope>
</reference>
<evidence type="ECO:0000250" key="1"/>
<evidence type="ECO:0000250" key="2">
    <source>
        <dbReference type="UniProtKB" id="P97573"/>
    </source>
</evidence>
<evidence type="ECO:0000250" key="3">
    <source>
        <dbReference type="UniProtKB" id="Q9ES52"/>
    </source>
</evidence>
<evidence type="ECO:0000255" key="4">
    <source>
        <dbReference type="PROSITE-ProRule" id="PRU00191"/>
    </source>
</evidence>
<evidence type="ECO:0000256" key="5">
    <source>
        <dbReference type="SAM" id="MobiDB-lite"/>
    </source>
</evidence>
<evidence type="ECO:0000269" key="6">
    <source>
    </source>
</evidence>
<evidence type="ECO:0000269" key="7">
    <source>
    </source>
</evidence>
<evidence type="ECO:0000269" key="8">
    <source>
    </source>
</evidence>
<evidence type="ECO:0000269" key="9">
    <source>
    </source>
</evidence>
<evidence type="ECO:0000269" key="10">
    <source>
    </source>
</evidence>
<evidence type="ECO:0000269" key="11">
    <source>
    </source>
</evidence>
<evidence type="ECO:0000269" key="12">
    <source>
    </source>
</evidence>
<evidence type="ECO:0000269" key="13">
    <source>
    </source>
</evidence>
<evidence type="ECO:0000269" key="14">
    <source>
    </source>
</evidence>
<evidence type="ECO:0000269" key="15">
    <source>
    </source>
</evidence>
<evidence type="ECO:0000269" key="16">
    <source>
    </source>
</evidence>
<evidence type="ECO:0000269" key="17">
    <source>
    </source>
</evidence>
<evidence type="ECO:0000269" key="18">
    <source>
    </source>
</evidence>
<evidence type="ECO:0000269" key="19">
    <source>
    </source>
</evidence>
<evidence type="ECO:0000303" key="20">
    <source>
    </source>
</evidence>
<evidence type="ECO:0000303" key="21">
    <source>
    </source>
</evidence>
<evidence type="ECO:0000303" key="22">
    <source>
    </source>
</evidence>
<evidence type="ECO:0000303" key="23">
    <source>
    </source>
</evidence>
<evidence type="ECO:0000303" key="24">
    <source>
    </source>
</evidence>
<evidence type="ECO:0000303" key="25">
    <source>
    </source>
</evidence>
<evidence type="ECO:0000305" key="26"/>
<evidence type="ECO:0000305" key="27">
    <source>
    </source>
</evidence>
<evidence type="ECO:0000305" key="28">
    <source>
    </source>
</evidence>
<evidence type="ECO:0000305" key="29">
    <source>
    </source>
</evidence>
<evidence type="ECO:0000305" key="30">
    <source>
    </source>
</evidence>
<evidence type="ECO:0007744" key="31">
    <source>
    </source>
</evidence>
<evidence type="ECO:0007744" key="32">
    <source>
    </source>
</evidence>
<evidence type="ECO:0007829" key="33">
    <source>
        <dbReference type="PDB" id="2YSX"/>
    </source>
</evidence>
<evidence type="ECO:0007829" key="34">
    <source>
        <dbReference type="PDB" id="5RWB"/>
    </source>
</evidence>
<evidence type="ECO:0007829" key="35">
    <source>
        <dbReference type="PDB" id="5RWK"/>
    </source>
</evidence>
<evidence type="ECO:0007829" key="36">
    <source>
        <dbReference type="PDB" id="5RWW"/>
    </source>
</evidence>
<proteinExistence type="evidence at protein level"/>
<comment type="function">
    <text evidence="6 8 11 15 16 19">Phosphatidylinositol (PtdIns) phosphatase that specifically hydrolyzes the 5-phosphate of phosphatidylinositol-3,4,5-trisphosphate (PtdIns(3,4,5)P3) to produce PtdIns(3,4)P2, thereby negatively regulating the PI3K (phosphoinositide 3-kinase) pathways (PubMed:10764818, PubMed:8723348, PubMed:8769125). Able also to hydrolyzes the 5-phosphate of phosphatidylinositol-4,5-bisphosphate (PtdIns(4,5)P3) and inositol 1,3,4,5-tetrakisphosphate (PubMed:10764818, PubMed:8769125, PubMed:9108392). Acts as a negative regulator of B-cell antigen receptor signaling. Mediates signaling from the FC-gamma-RIIB receptor (FCGR2B), playing a central role in terminating signal transduction from activating immune/hematopoietic cell receptor systems. Acts as a negative regulator of myeloid cell proliferation/survival and chemotaxis, mast cell degranulation, immune cells homeostasis, integrin alpha-IIb/beta-3 signaling in platelets and JNK signaling in B-cells. Regulates proliferation of osteoclast precursors, macrophage programming, phagocytosis and activation and is required for endotoxin tolerance. Involved in the control of cell-cell junctions, CD32a signaling in neutrophils and modulation of EGF-induced phospholipase C activity (PubMed:16682172). Key regulator of neutrophil migration, by governing the formation of the leading edge and polarization required for chemotaxis. Modulates FCGR3/CD16-mediated cytotoxicity in NK cells. Mediates the activin/TGF-beta-induced apoptosis through its Smad-dependent expression.</text>
</comment>
<comment type="catalytic activity">
    <reaction evidence="6 15 16">
        <text>a 1,2-diacyl-sn-glycero-3-phospho-(1D-myo-inositol-3,4,5-trisphosphate) + H2O = a 1,2-diacyl-sn-glycero-3-phospho-(1D-myo-inositol-3,4-bisphosphate) + phosphate</text>
        <dbReference type="Rhea" id="RHEA:25528"/>
        <dbReference type="ChEBI" id="CHEBI:15377"/>
        <dbReference type="ChEBI" id="CHEBI:43474"/>
        <dbReference type="ChEBI" id="CHEBI:57658"/>
        <dbReference type="ChEBI" id="CHEBI:57836"/>
        <dbReference type="EC" id="3.1.3.86"/>
    </reaction>
    <physiologicalReaction direction="left-to-right" evidence="27 28 29">
        <dbReference type="Rhea" id="RHEA:25529"/>
    </physiologicalReaction>
</comment>
<comment type="catalytic activity">
    <reaction evidence="16 19">
        <text>1D-myo-inositol 1,3,4,5-tetrakisphosphate + H2O = 1D-myo-inositol 1,3,4-trisphosphate + phosphate</text>
        <dbReference type="Rhea" id="RHEA:11392"/>
        <dbReference type="ChEBI" id="CHEBI:15377"/>
        <dbReference type="ChEBI" id="CHEBI:43474"/>
        <dbReference type="ChEBI" id="CHEBI:57895"/>
        <dbReference type="ChEBI" id="CHEBI:58414"/>
        <dbReference type="EC" id="3.1.3.56"/>
    </reaction>
    <physiologicalReaction direction="left-to-right" evidence="29 30">
        <dbReference type="Rhea" id="RHEA:11393"/>
    </physiologicalReaction>
</comment>
<comment type="catalytic activity">
    <reaction evidence="6">
        <text>a 1,2-diacyl-sn-glycero-3-phospho-(1D-myo-inositol-4,5-bisphosphate) + H2O = a 1,2-diacyl-sn-glycero-3-phospho-(1D-myo-inositol 4-phosphate) + phosphate</text>
        <dbReference type="Rhea" id="RHEA:22764"/>
        <dbReference type="ChEBI" id="CHEBI:15377"/>
        <dbReference type="ChEBI" id="CHEBI:43474"/>
        <dbReference type="ChEBI" id="CHEBI:58178"/>
        <dbReference type="ChEBI" id="CHEBI:58456"/>
        <dbReference type="EC" id="3.1.3.36"/>
    </reaction>
    <physiologicalReaction direction="left-to-right" evidence="27">
        <dbReference type="Rhea" id="RHEA:22765"/>
    </physiologicalReaction>
</comment>
<comment type="activity regulation">
    <text evidence="1">Activated upon translocation to the sites of synthesis of PtdIns(3,4,5)P3 in the membrane.</text>
</comment>
<comment type="biophysicochemical properties">
    <kinetics>
        <KM evidence="6">5.95 uM for phosphatidylinositol-3,4,5-trisphosphate</KM>
        <Vmax evidence="6">0.458 umol/min/mg enzyme with phosphatidylinositol-3,4,5-trisphosphate as substrate</Vmax>
    </kinetics>
</comment>
<comment type="subunit">
    <text evidence="2 3 12 13 14">Interacts with tyrosine phosphorylated form of SHC1 (PubMed:8874179). Interacts with tyrosine phosphorylated form of DOK1 (PubMed:10822173). Interacts with tyrosine phosphorylated form of DOK3 (By similarity). Interacts with tyrosine phosphorylated form of SLAMF1/CD150 (PubMed:10229804). Interacts with PTPN11 in response to IL-3 (By similarity). Interacts with receptor EPOR (By similarity). Interacts with receptors MS4A2/FCER1B and FCER1G (By similarity). Interacts with receptors FCGR2B and FCGR3 (By similarity). Interacts with receptor FCGR2A, leading to regulate gene expression during the phagocytic process (By similarity). Interacts with GRB2 (PubMed:8723348, PubMed:9108392). Interacts with PLCG1 (By similarity). Interacts with tyrosine kinases SRC and TEC (By similarity). Interacts with c-Met/MET (By similarity). Interacts with MILR1 (tyrosine-phosphorylated) (By similarity). Can weakly interact (via NPXY motif 2) with DAB2 (via PID domain); the interaction is impaired by tyrosine phosphorylation of the NPXY motif (By similarity). Interacts with FCRL3 and FCRL6 (tyrosine phosphorylated form) (PubMed:19843936, PubMed:20933011). Interacts (via SH2 domain) with tyrosine phosphorylated KLRC1 (via ITIM). Interacts with MPL/TPOR (PubMed:24607955).</text>
</comment>
<comment type="interaction">
    <interactant intactId="EBI-1380477">
        <id>Q92835</id>
    </interactant>
    <interactant intactId="EBI-1580565">
        <id>Q9BZW8</id>
        <label>CD244</label>
    </interactant>
    <organismsDiffer>false</organismsDiffer>
    <experiments>6</experiments>
</comment>
<comment type="interaction">
    <interactant intactId="EBI-1380477">
        <id>Q92835</id>
    </interactant>
    <interactant intactId="EBI-724784">
        <id>P31994</id>
        <label>FCGR2B</label>
    </interactant>
    <organismsDiffer>false</organismsDiffer>
    <experiments>3</experiments>
</comment>
<comment type="interaction">
    <interactant intactId="EBI-1380477">
        <id>Q92835</id>
    </interactant>
    <interactant intactId="EBI-722504">
        <id>O75525</id>
        <label>KHDRBS3</label>
    </interactant>
    <organismsDiffer>false</organismsDiffer>
    <experiments>3</experiments>
</comment>
<comment type="interaction">
    <interactant intactId="EBI-1380477">
        <id>Q92835</id>
    </interactant>
    <interactant intactId="EBI-948001">
        <id>Q15323</id>
        <label>KRT31</label>
    </interactant>
    <organismsDiffer>false</organismsDiffer>
    <experiments>3</experiments>
</comment>
<comment type="interaction">
    <interactant intactId="EBI-1380477">
        <id>Q92835</id>
    </interactant>
    <interactant intactId="EBI-10171697">
        <id>Q6A162</id>
        <label>KRT40</label>
    </interactant>
    <organismsDiffer>false</organismsDiffer>
    <experiments>3</experiments>
</comment>
<comment type="interaction">
    <interactant intactId="EBI-1380477">
        <id>Q92835</id>
    </interactant>
    <interactant intactId="EBI-10172290">
        <id>P60409</id>
        <label>KRTAP10-7</label>
    </interactant>
    <organismsDiffer>false</organismsDiffer>
    <experiments>3</experiments>
</comment>
<comment type="interaction">
    <interactant intactId="EBI-1380477">
        <id>Q92835</id>
    </interactant>
    <interactant intactId="EBI-10172052">
        <id>P60411</id>
        <label>KRTAP10-9</label>
    </interactant>
    <organismsDiffer>false</organismsDiffer>
    <experiments>3</experiments>
</comment>
<comment type="interaction">
    <interactant intactId="EBI-1380477">
        <id>Q92835</id>
    </interactant>
    <interactant intactId="EBI-945833">
        <id>Q7Z3S9</id>
        <label>NOTCH2NLA</label>
    </interactant>
    <organismsDiffer>false</organismsDiffer>
    <experiments>3</experiments>
</comment>
<comment type="interaction">
    <interactant intactId="EBI-1380477">
        <id>Q92835</id>
    </interactant>
    <interactant intactId="EBI-346595">
        <id>Q96B97</id>
        <label>SH3KBP1</label>
    </interactant>
    <organismsDiffer>false</organismsDiffer>
    <experiments>6</experiments>
</comment>
<comment type="interaction">
    <interactant intactId="EBI-9092209">
        <id>Q92835-2</id>
    </interactant>
    <interactant intactId="EBI-3867333">
        <id>A8MQ03</id>
        <label>CYSRT1</label>
    </interactant>
    <organismsDiffer>false</organismsDiffer>
    <experiments>3</experiments>
</comment>
<comment type="interaction">
    <interactant intactId="EBI-9092209">
        <id>Q92835-2</id>
    </interactant>
    <interactant intactId="EBI-722504">
        <id>O75525</id>
        <label>KHDRBS3</label>
    </interactant>
    <organismsDiffer>false</organismsDiffer>
    <experiments>3</experiments>
</comment>
<comment type="interaction">
    <interactant intactId="EBI-9092209">
        <id>Q92835-2</id>
    </interactant>
    <interactant intactId="EBI-11749135">
        <id>Q8IUG1</id>
        <label>KRTAP1-3</label>
    </interactant>
    <organismsDiffer>false</organismsDiffer>
    <experiments>3</experiments>
</comment>
<comment type="interaction">
    <interactant intactId="EBI-9092209">
        <id>Q92835-2</id>
    </interactant>
    <interactant intactId="EBI-22311199">
        <id>Q3LI67</id>
        <label>KRTAP6-3</label>
    </interactant>
    <organismsDiffer>false</organismsDiffer>
    <experiments>3</experiments>
</comment>
<comment type="subcellular location">
    <subcellularLocation>
        <location evidence="7">Cytoplasm</location>
    </subcellularLocation>
    <subcellularLocation>
        <location evidence="3">Cell membrane</location>
        <topology evidence="3">Peripheral membrane protein</topology>
    </subcellularLocation>
    <subcellularLocation>
        <location evidence="3">Membrane raft</location>
    </subcellularLocation>
    <subcellularLocation>
        <location evidence="3">Cytoplasm</location>
        <location evidence="3">Cytoskeleton</location>
    </subcellularLocation>
    <subcellularLocation>
        <location evidence="7">Membrane</location>
        <topology evidence="7">Peripheral membrane protein</topology>
    </subcellularLocation>
    <text evidence="3">Translocates to the plasma membrane when activated, translocation is probably due to different mechanisms depending on the stimulus and cell type. Translocates from the cytoplasm to membrane ruffles in a FCGR3/CD16-dependent manner. Colocalizes with FC-gamma-RIIB receptor (FCGR2B) or FCGR3/CD16 at membrane ruffles. Tyrosine phosphorylation may also participate in membrane localization.</text>
</comment>
<comment type="alternative products">
    <event type="alternative splicing"/>
    <isoform>
        <id>Q92835-1</id>
        <name>1</name>
        <sequence type="displayed"/>
    </isoform>
    <isoform>
        <id>Q92835-2</id>
        <name>2</name>
        <sequence type="described" ref="VSP_027978"/>
    </isoform>
    <isoform>
        <id>Q92835-3</id>
        <name>3</name>
        <name>SIP-110</name>
        <sequence type="described" ref="VSP_027977 VSP_027979"/>
    </isoform>
</comment>
<comment type="tissue specificity">
    <text evidence="16 17 18 19">Specifically expressed in immune and hematopoietic cells. Expressed in bone marrow and blood cells. Levels vary considerably within this compartment. Present in at least 74% of immature CD34+ cells, whereas within the more mature population of CD33+ cells, it is present in only 10% of cells. Present in the majority of T-cells, while it is present in a minority of B-cells (at protein level).</text>
</comment>
<comment type="domain">
    <text evidence="3">The SH2 domain interacts with tyrosine phosphorylated forms of proteins such as SHC1 or PTPN11/SHP-2. It competes with that of GRB2 for binding to phosphorylated SHC1 to inhibit the Ras pathway. It is also required for tyrosine phosphorylation (By similarity).</text>
</comment>
<comment type="domain">
    <text evidence="3">The NPXY sequence motif found in many tyrosine-phosphorylated proteins is required for the specific binding of the PID domain.</text>
</comment>
<comment type="PTM">
    <text evidence="7 19">Tyrosine phosphorylated by the members of the SRC family after exposure to a diverse array of extracellular stimuli such as cytokines, growth factors, antibodies, chemokines, integrin ligands and hypertonic and oxidative stress. Phosphorylated upon IgG receptor FCGR2B-binding.</text>
</comment>
<comment type="similarity">
    <text evidence="26">Belongs to the inositol 1,4,5-trisphosphate 5-phosphatase family.</text>
</comment>
<comment type="sequence caution" evidence="26">
    <conflict type="erroneous initiation">
        <sequence resource="EMBL-CDS" id="AAC50454"/>
    </conflict>
    <text>Extended N-terminus.</text>
</comment>
<keyword id="KW-0002">3D-structure</keyword>
<keyword id="KW-0025">Alternative splicing</keyword>
<keyword id="KW-0053">Apoptosis</keyword>
<keyword id="KW-1003">Cell membrane</keyword>
<keyword id="KW-0963">Cytoplasm</keyword>
<keyword id="KW-0206">Cytoskeleton</keyword>
<keyword id="KW-0378">Hydrolase</keyword>
<keyword id="KW-0391">Immunity</keyword>
<keyword id="KW-0443">Lipid metabolism</keyword>
<keyword id="KW-0472">Membrane</keyword>
<keyword id="KW-0597">Phosphoprotein</keyword>
<keyword id="KW-1267">Proteomics identification</keyword>
<keyword id="KW-1185">Reference proteome</keyword>
<keyword id="KW-0677">Repeat</keyword>
<keyword id="KW-0727">SH2 domain</keyword>
<keyword id="KW-0729">SH3-binding</keyword>
<protein>
    <recommendedName>
        <fullName>Phosphatidylinositol 3,4,5-trisphosphate 5-phosphatase 1</fullName>
        <ecNumber evidence="6 15 16">3.1.3.86</ecNumber>
    </recommendedName>
    <alternativeName>
        <fullName>Inositol polyphosphate-5-phosphatase D</fullName>
        <ecNumber evidence="16 19">3.1.3.56</ecNumber>
    </alternativeName>
    <alternativeName>
        <fullName evidence="24">Inositol polyphosphate-5-phosphatase of 145 kDa</fullName>
        <shortName evidence="24">SIP-145</shortName>
    </alternativeName>
    <alternativeName>
        <fullName>Phosphatidylinositol 4,5-bisphosphate 5-phosphatase</fullName>
        <ecNumber evidence="6">3.1.3.36</ecNumber>
    </alternativeName>
    <alternativeName>
        <fullName evidence="25">SH2 domain-containing inositol 5'-phosphatase 1</fullName>
        <shortName>SH2 domain-containing inositol phosphatase 1</shortName>
        <shortName>SHIP-1</shortName>
    </alternativeName>
    <alternativeName>
        <fullName>p150Ship</fullName>
        <shortName evidence="23">hp51CN</shortName>
    </alternativeName>
</protein>
<gene>
    <name type="primary">INPP5D</name>
    <name evidence="20" type="synonym">SHIP</name>
    <name type="synonym">SHIP1</name>
</gene>